<proteinExistence type="inferred from homology"/>
<accession>Q8TMI3</accession>
<feature type="chain" id="PRO_0000137549" description="Inorganic pyrophosphatase">
    <location>
        <begin position="1"/>
        <end position="168"/>
    </location>
</feature>
<feature type="binding site" evidence="1">
    <location>
        <position position="23"/>
    </location>
    <ligand>
        <name>substrate</name>
    </ligand>
</feature>
<feature type="binding site" evidence="1">
    <location>
        <position position="37"/>
    </location>
    <ligand>
        <name>substrate</name>
    </ligand>
</feature>
<feature type="binding site" evidence="1">
    <location>
        <position position="49"/>
    </location>
    <ligand>
        <name>substrate</name>
    </ligand>
</feature>
<feature type="binding site" evidence="1">
    <location>
        <position position="59"/>
    </location>
    <ligand>
        <name>Mg(2+)</name>
        <dbReference type="ChEBI" id="CHEBI:18420"/>
        <label>1</label>
    </ligand>
</feature>
<feature type="binding site" evidence="1">
    <location>
        <position position="64"/>
    </location>
    <ligand>
        <name>Mg(2+)</name>
        <dbReference type="ChEBI" id="CHEBI:18420"/>
        <label>1</label>
    </ligand>
</feature>
<feature type="binding site" evidence="1">
    <location>
        <position position="64"/>
    </location>
    <ligand>
        <name>Mg(2+)</name>
        <dbReference type="ChEBI" id="CHEBI:18420"/>
        <label>2</label>
    </ligand>
</feature>
<feature type="binding site" evidence="1">
    <location>
        <position position="96"/>
    </location>
    <ligand>
        <name>Mg(2+)</name>
        <dbReference type="ChEBI" id="CHEBI:18420"/>
        <label>1</label>
    </ligand>
</feature>
<feature type="binding site" evidence="1">
    <location>
        <position position="133"/>
    </location>
    <ligand>
        <name>substrate</name>
    </ligand>
</feature>
<reference key="1">
    <citation type="journal article" date="2002" name="Genome Res.">
        <title>The genome of Methanosarcina acetivorans reveals extensive metabolic and physiological diversity.</title>
        <authorList>
            <person name="Galagan J.E."/>
            <person name="Nusbaum C."/>
            <person name="Roy A."/>
            <person name="Endrizzi M.G."/>
            <person name="Macdonald P."/>
            <person name="FitzHugh W."/>
            <person name="Calvo S."/>
            <person name="Engels R."/>
            <person name="Smirnov S."/>
            <person name="Atnoor D."/>
            <person name="Brown A."/>
            <person name="Allen N."/>
            <person name="Naylor J."/>
            <person name="Stange-Thomann N."/>
            <person name="DeArellano K."/>
            <person name="Johnson R."/>
            <person name="Linton L."/>
            <person name="McEwan P."/>
            <person name="McKernan K."/>
            <person name="Talamas J."/>
            <person name="Tirrell A."/>
            <person name="Ye W."/>
            <person name="Zimmer A."/>
            <person name="Barber R.D."/>
            <person name="Cann I."/>
            <person name="Graham D.E."/>
            <person name="Grahame D.A."/>
            <person name="Guss A.M."/>
            <person name="Hedderich R."/>
            <person name="Ingram-Smith C."/>
            <person name="Kuettner H.C."/>
            <person name="Krzycki J.A."/>
            <person name="Leigh J.A."/>
            <person name="Li W."/>
            <person name="Liu J."/>
            <person name="Mukhopadhyay B."/>
            <person name="Reeve J.N."/>
            <person name="Smith K."/>
            <person name="Springer T.A."/>
            <person name="Umayam L.A."/>
            <person name="White O."/>
            <person name="White R.H."/>
            <person name="de Macario E.C."/>
            <person name="Ferry J.G."/>
            <person name="Jarrell K.F."/>
            <person name="Jing H."/>
            <person name="Macario A.J.L."/>
            <person name="Paulsen I.T."/>
            <person name="Pritchett M."/>
            <person name="Sowers K.R."/>
            <person name="Swanson R.V."/>
            <person name="Zinder S.H."/>
            <person name="Lander E."/>
            <person name="Metcalf W.W."/>
            <person name="Birren B."/>
        </authorList>
    </citation>
    <scope>NUCLEOTIDE SEQUENCE [LARGE SCALE GENOMIC DNA]</scope>
    <source>
        <strain>ATCC 35395 / DSM 2834 / JCM 12185 / C2A</strain>
    </source>
</reference>
<protein>
    <recommendedName>
        <fullName evidence="1">Inorganic pyrophosphatase</fullName>
        <ecNumber evidence="1">3.6.1.1</ecNumber>
    </recommendedName>
    <alternativeName>
        <fullName evidence="1">Pyrophosphate phospho-hydrolase</fullName>
        <shortName evidence="1">PPase</shortName>
    </alternativeName>
</protein>
<sequence length="168" mass="19525">MLDMTERQVESVLIEIPKGSRNKYEYDKEKKVIKFDRMLFSSMVYPCDYGFFPDTLALDGDPLDALVLTWEPTFPGCVIDVHPVALLDMKDDKGRDEKILCVPETDPLWNYIETLEQVPPHLLKEIVHFFETYKNLEGKHVIVIGWEGLDAAVDMLREAKSRYLEKNK</sequence>
<gene>
    <name evidence="1" type="primary">ppa</name>
    <name type="ordered locus">MA_2676</name>
</gene>
<organism>
    <name type="scientific">Methanosarcina acetivorans (strain ATCC 35395 / DSM 2834 / JCM 12185 / C2A)</name>
    <dbReference type="NCBI Taxonomy" id="188937"/>
    <lineage>
        <taxon>Archaea</taxon>
        <taxon>Methanobacteriati</taxon>
        <taxon>Methanobacteriota</taxon>
        <taxon>Stenosarchaea group</taxon>
        <taxon>Methanomicrobia</taxon>
        <taxon>Methanosarcinales</taxon>
        <taxon>Methanosarcinaceae</taxon>
        <taxon>Methanosarcina</taxon>
    </lineage>
</organism>
<evidence type="ECO:0000255" key="1">
    <source>
        <dbReference type="HAMAP-Rule" id="MF_00209"/>
    </source>
</evidence>
<comment type="function">
    <text evidence="1">Catalyzes the hydrolysis of inorganic pyrophosphate (PPi) forming two phosphate ions.</text>
</comment>
<comment type="catalytic activity">
    <reaction evidence="1">
        <text>diphosphate + H2O = 2 phosphate + H(+)</text>
        <dbReference type="Rhea" id="RHEA:24576"/>
        <dbReference type="ChEBI" id="CHEBI:15377"/>
        <dbReference type="ChEBI" id="CHEBI:15378"/>
        <dbReference type="ChEBI" id="CHEBI:33019"/>
        <dbReference type="ChEBI" id="CHEBI:43474"/>
        <dbReference type="EC" id="3.6.1.1"/>
    </reaction>
</comment>
<comment type="cofactor">
    <cofactor evidence="1">
        <name>Mg(2+)</name>
        <dbReference type="ChEBI" id="CHEBI:18420"/>
    </cofactor>
</comment>
<comment type="subunit">
    <text evidence="1">Homohexamer.</text>
</comment>
<comment type="subcellular location">
    <subcellularLocation>
        <location evidence="1">Cytoplasm</location>
    </subcellularLocation>
</comment>
<comment type="similarity">
    <text evidence="1">Belongs to the PPase family.</text>
</comment>
<name>IPYR_METAC</name>
<keyword id="KW-0963">Cytoplasm</keyword>
<keyword id="KW-0378">Hydrolase</keyword>
<keyword id="KW-0460">Magnesium</keyword>
<keyword id="KW-0479">Metal-binding</keyword>
<keyword id="KW-1185">Reference proteome</keyword>
<dbReference type="EC" id="3.6.1.1" evidence="1"/>
<dbReference type="EMBL" id="AE010299">
    <property type="protein sequence ID" value="AAM06052.1"/>
    <property type="molecule type" value="Genomic_DNA"/>
</dbReference>
<dbReference type="SMR" id="Q8TMI3"/>
<dbReference type="STRING" id="188937.MA_2676"/>
<dbReference type="EnsemblBacteria" id="AAM06052">
    <property type="protein sequence ID" value="AAM06052"/>
    <property type="gene ID" value="MA_2676"/>
</dbReference>
<dbReference type="KEGG" id="mac:MA_2676"/>
<dbReference type="HOGENOM" id="CLU_073198_1_0_2"/>
<dbReference type="InParanoid" id="Q8TMI3"/>
<dbReference type="PhylomeDB" id="Q8TMI3"/>
<dbReference type="Proteomes" id="UP000002487">
    <property type="component" value="Chromosome"/>
</dbReference>
<dbReference type="GO" id="GO:0005737">
    <property type="term" value="C:cytoplasm"/>
    <property type="evidence" value="ECO:0007669"/>
    <property type="project" value="UniProtKB-SubCell"/>
</dbReference>
<dbReference type="GO" id="GO:0004427">
    <property type="term" value="F:inorganic diphosphate phosphatase activity"/>
    <property type="evidence" value="ECO:0000318"/>
    <property type="project" value="GO_Central"/>
</dbReference>
<dbReference type="GO" id="GO:0000287">
    <property type="term" value="F:magnesium ion binding"/>
    <property type="evidence" value="ECO:0007669"/>
    <property type="project" value="UniProtKB-UniRule"/>
</dbReference>
<dbReference type="GO" id="GO:0006796">
    <property type="term" value="P:phosphate-containing compound metabolic process"/>
    <property type="evidence" value="ECO:0000318"/>
    <property type="project" value="GO_Central"/>
</dbReference>
<dbReference type="CDD" id="cd00412">
    <property type="entry name" value="pyrophosphatase"/>
    <property type="match status" value="1"/>
</dbReference>
<dbReference type="FunFam" id="3.90.80.10:FF:000003">
    <property type="entry name" value="Inorganic pyrophosphatase"/>
    <property type="match status" value="1"/>
</dbReference>
<dbReference type="Gene3D" id="3.90.80.10">
    <property type="entry name" value="Inorganic pyrophosphatase"/>
    <property type="match status" value="1"/>
</dbReference>
<dbReference type="HAMAP" id="MF_00209">
    <property type="entry name" value="Inorganic_PPase"/>
    <property type="match status" value="1"/>
</dbReference>
<dbReference type="InterPro" id="IPR008162">
    <property type="entry name" value="Pyrophosphatase"/>
</dbReference>
<dbReference type="InterPro" id="IPR036649">
    <property type="entry name" value="Pyrophosphatase_sf"/>
</dbReference>
<dbReference type="PANTHER" id="PTHR10286">
    <property type="entry name" value="INORGANIC PYROPHOSPHATASE"/>
    <property type="match status" value="1"/>
</dbReference>
<dbReference type="Pfam" id="PF00719">
    <property type="entry name" value="Pyrophosphatase"/>
    <property type="match status" value="1"/>
</dbReference>
<dbReference type="SUPFAM" id="SSF50324">
    <property type="entry name" value="Inorganic pyrophosphatase"/>
    <property type="match status" value="1"/>
</dbReference>
<dbReference type="PROSITE" id="PS00387">
    <property type="entry name" value="PPASE"/>
    <property type="match status" value="1"/>
</dbReference>